<sequence length="230" mass="26472">MKYNSVIRKAIFLRRPNRFQAYVVLDDEELLVHVPNTGRCREILKEGCTVLLRKGTTPNRKTPYDLIAAYKGEVLINIDSQIPNKVVEEALINKKIEKLVNFNNISREKTFGNSRFDFKLQDDNENTYFLEVKGVTLEENGETRFPDAPTERGKKHILELIEIKKLGMGAGIIFLIQIDNVNKFSPNDETDPKFGEALRLAKKERVDIFAYNCKVTEEEIELLNPVEIVL</sequence>
<gene>
    <name evidence="1" type="primary">sfsA</name>
    <name type="ordered locus">CPF_0574</name>
</gene>
<organism>
    <name type="scientific">Clostridium perfringens (strain ATCC 13124 / DSM 756 / JCM 1290 / NCIMB 6125 / NCTC 8237 / Type A)</name>
    <dbReference type="NCBI Taxonomy" id="195103"/>
    <lineage>
        <taxon>Bacteria</taxon>
        <taxon>Bacillati</taxon>
        <taxon>Bacillota</taxon>
        <taxon>Clostridia</taxon>
        <taxon>Eubacteriales</taxon>
        <taxon>Clostridiaceae</taxon>
        <taxon>Clostridium</taxon>
    </lineage>
</organism>
<feature type="chain" id="PRO_1000007977" description="Sugar fermentation stimulation protein homolog">
    <location>
        <begin position="1"/>
        <end position="230"/>
    </location>
</feature>
<evidence type="ECO:0000255" key="1">
    <source>
        <dbReference type="HAMAP-Rule" id="MF_00095"/>
    </source>
</evidence>
<reference key="1">
    <citation type="journal article" date="2006" name="Genome Res.">
        <title>Skewed genomic variability in strains of the toxigenic bacterial pathogen, Clostridium perfringens.</title>
        <authorList>
            <person name="Myers G.S.A."/>
            <person name="Rasko D.A."/>
            <person name="Cheung J.K."/>
            <person name="Ravel J."/>
            <person name="Seshadri R."/>
            <person name="DeBoy R.T."/>
            <person name="Ren Q."/>
            <person name="Varga J."/>
            <person name="Awad M.M."/>
            <person name="Brinkac L.M."/>
            <person name="Daugherty S.C."/>
            <person name="Haft D.H."/>
            <person name="Dodson R.J."/>
            <person name="Madupu R."/>
            <person name="Nelson W.C."/>
            <person name="Rosovitz M.J."/>
            <person name="Sullivan S.A."/>
            <person name="Khouri H."/>
            <person name="Dimitrov G.I."/>
            <person name="Watkins K.L."/>
            <person name="Mulligan S."/>
            <person name="Benton J."/>
            <person name="Radune D."/>
            <person name="Fisher D.J."/>
            <person name="Atkins H.S."/>
            <person name="Hiscox T."/>
            <person name="Jost B.H."/>
            <person name="Billington S.J."/>
            <person name="Songer J.G."/>
            <person name="McClane B.A."/>
            <person name="Titball R.W."/>
            <person name="Rood J.I."/>
            <person name="Melville S.B."/>
            <person name="Paulsen I.T."/>
        </authorList>
    </citation>
    <scope>NUCLEOTIDE SEQUENCE [LARGE SCALE GENOMIC DNA]</scope>
    <source>
        <strain>ATCC 13124 / DSM 756 / JCM 1290 / NCIMB 6125 / NCTC 8237 / S 107 / Type A</strain>
    </source>
</reference>
<dbReference type="EMBL" id="CP000246">
    <property type="protein sequence ID" value="ABG82808.1"/>
    <property type="molecule type" value="Genomic_DNA"/>
</dbReference>
<dbReference type="RefSeq" id="WP_003460225.1">
    <property type="nucleotide sequence ID" value="NC_008261.1"/>
</dbReference>
<dbReference type="SMR" id="Q0TTL3"/>
<dbReference type="STRING" id="195103.CPF_0574"/>
<dbReference type="PaxDb" id="195103-CPF_0574"/>
<dbReference type="GeneID" id="93003082"/>
<dbReference type="KEGG" id="cpf:CPF_0574"/>
<dbReference type="eggNOG" id="COG1489">
    <property type="taxonomic scope" value="Bacteria"/>
</dbReference>
<dbReference type="HOGENOM" id="CLU_052299_1_0_9"/>
<dbReference type="Proteomes" id="UP000001823">
    <property type="component" value="Chromosome"/>
</dbReference>
<dbReference type="GO" id="GO:0003677">
    <property type="term" value="F:DNA binding"/>
    <property type="evidence" value="ECO:0007669"/>
    <property type="project" value="InterPro"/>
</dbReference>
<dbReference type="CDD" id="cd22359">
    <property type="entry name" value="SfsA-like_bacterial"/>
    <property type="match status" value="1"/>
</dbReference>
<dbReference type="FunFam" id="2.40.50.580:FF:000002">
    <property type="entry name" value="Sugar fermentation stimulation protein homolog"/>
    <property type="match status" value="1"/>
</dbReference>
<dbReference type="Gene3D" id="2.40.50.580">
    <property type="match status" value="1"/>
</dbReference>
<dbReference type="Gene3D" id="3.40.1350.60">
    <property type="match status" value="1"/>
</dbReference>
<dbReference type="HAMAP" id="MF_00095">
    <property type="entry name" value="SfsA"/>
    <property type="match status" value="1"/>
</dbReference>
<dbReference type="InterPro" id="IPR005224">
    <property type="entry name" value="SfsA"/>
</dbReference>
<dbReference type="InterPro" id="IPR040452">
    <property type="entry name" value="SfsA_C"/>
</dbReference>
<dbReference type="InterPro" id="IPR041465">
    <property type="entry name" value="SfsA_N"/>
</dbReference>
<dbReference type="NCBIfam" id="TIGR00230">
    <property type="entry name" value="sfsA"/>
    <property type="match status" value="1"/>
</dbReference>
<dbReference type="PANTHER" id="PTHR30545">
    <property type="entry name" value="SUGAR FERMENTATION STIMULATION PROTEIN A"/>
    <property type="match status" value="1"/>
</dbReference>
<dbReference type="PANTHER" id="PTHR30545:SF2">
    <property type="entry name" value="SUGAR FERMENTATION STIMULATION PROTEIN A"/>
    <property type="match status" value="1"/>
</dbReference>
<dbReference type="Pfam" id="PF03749">
    <property type="entry name" value="SfsA"/>
    <property type="match status" value="1"/>
</dbReference>
<dbReference type="Pfam" id="PF17746">
    <property type="entry name" value="SfsA_N"/>
    <property type="match status" value="1"/>
</dbReference>
<protein>
    <recommendedName>
        <fullName evidence="1">Sugar fermentation stimulation protein homolog</fullName>
    </recommendedName>
</protein>
<proteinExistence type="inferred from homology"/>
<comment type="similarity">
    <text evidence="1">Belongs to the SfsA family.</text>
</comment>
<name>SFSA_CLOP1</name>
<accession>Q0TTL3</accession>